<comment type="subcellular location">
    <subcellularLocation>
        <location evidence="1">Spore core</location>
    </subcellularLocation>
</comment>
<comment type="induction">
    <text evidence="1">Expressed only in the forespore compartment of sporulating cells.</text>
</comment>
<comment type="similarity">
    <text evidence="1">Belongs to the SspN family.</text>
</comment>
<feature type="chain" id="PRO_1000196550" description="Small, acid-soluble spore protein N">
    <location>
        <begin position="1"/>
        <end position="44"/>
    </location>
</feature>
<feature type="region of interest" description="Disordered" evidence="2">
    <location>
        <begin position="1"/>
        <end position="44"/>
    </location>
</feature>
<protein>
    <recommendedName>
        <fullName evidence="1">Small, acid-soluble spore protein N</fullName>
        <shortName evidence="1">SASP N</shortName>
    </recommendedName>
</protein>
<dbReference type="EMBL" id="CP001177">
    <property type="protein sequence ID" value="ACJ78274.1"/>
    <property type="molecule type" value="Genomic_DNA"/>
</dbReference>
<dbReference type="KEGG" id="bcr:BCAH187_A3635"/>
<dbReference type="HOGENOM" id="CLU_216714_0_0_9"/>
<dbReference type="Proteomes" id="UP000002214">
    <property type="component" value="Chromosome"/>
</dbReference>
<dbReference type="GO" id="GO:0042601">
    <property type="term" value="C:endospore-forming forespore"/>
    <property type="evidence" value="ECO:0007669"/>
    <property type="project" value="InterPro"/>
</dbReference>
<dbReference type="GO" id="GO:0030436">
    <property type="term" value="P:asexual sporulation"/>
    <property type="evidence" value="ECO:0007669"/>
    <property type="project" value="UniProtKB-UniRule"/>
</dbReference>
<dbReference type="GO" id="GO:0030435">
    <property type="term" value="P:sporulation resulting in formation of a cellular spore"/>
    <property type="evidence" value="ECO:0007669"/>
    <property type="project" value="UniProtKB-KW"/>
</dbReference>
<dbReference type="HAMAP" id="MF_01505">
    <property type="entry name" value="SspN"/>
    <property type="match status" value="1"/>
</dbReference>
<dbReference type="InterPro" id="IPR012612">
    <property type="entry name" value="SASP_SspN"/>
</dbReference>
<dbReference type="NCBIfam" id="NF006904">
    <property type="entry name" value="PRK09398.1"/>
    <property type="match status" value="1"/>
</dbReference>
<dbReference type="Pfam" id="PF08177">
    <property type="entry name" value="SspN"/>
    <property type="match status" value="1"/>
</dbReference>
<sequence>MGNPKKNSKDFAPNHIGTQSKKAGGNKGKQMQDQTGKQPIVDNG</sequence>
<keyword id="KW-0749">Sporulation</keyword>
<proteinExistence type="inferred from homology"/>
<gene>
    <name evidence="1" type="primary">sspN</name>
    <name type="ordered locus">BCAH187_A3635</name>
</gene>
<organism>
    <name type="scientific">Bacillus cereus (strain AH187)</name>
    <dbReference type="NCBI Taxonomy" id="405534"/>
    <lineage>
        <taxon>Bacteria</taxon>
        <taxon>Bacillati</taxon>
        <taxon>Bacillota</taxon>
        <taxon>Bacilli</taxon>
        <taxon>Bacillales</taxon>
        <taxon>Bacillaceae</taxon>
        <taxon>Bacillus</taxon>
        <taxon>Bacillus cereus group</taxon>
    </lineage>
</organism>
<accession>B7I057</accession>
<reference key="1">
    <citation type="submission" date="2008-10" db="EMBL/GenBank/DDBJ databases">
        <title>Genome sequence of Bacillus cereus AH187.</title>
        <authorList>
            <person name="Dodson R.J."/>
            <person name="Durkin A.S."/>
            <person name="Rosovitz M.J."/>
            <person name="Rasko D.A."/>
            <person name="Kolsto A.B."/>
            <person name="Okstad O.A."/>
            <person name="Ravel J."/>
            <person name="Sutton G."/>
        </authorList>
    </citation>
    <scope>NUCLEOTIDE SEQUENCE [LARGE SCALE GENOMIC DNA]</scope>
    <source>
        <strain>AH187</strain>
    </source>
</reference>
<name>SSPN_BACC7</name>
<evidence type="ECO:0000255" key="1">
    <source>
        <dbReference type="HAMAP-Rule" id="MF_01505"/>
    </source>
</evidence>
<evidence type="ECO:0000256" key="2">
    <source>
        <dbReference type="SAM" id="MobiDB-lite"/>
    </source>
</evidence>